<name>AMY3_SCHPO</name>
<comment type="function">
    <text evidence="4">Has a role in cell wall biosynthesis where it is involved in maintaining cell wall strength and shape.</text>
</comment>
<comment type="catalytic activity">
    <reaction>
        <text>Endohydrolysis of (1-&gt;4)-alpha-D-glucosidic linkages in polysaccharides containing three or more (1-&gt;4)-alpha-linked D-glucose units.</text>
        <dbReference type="EC" id="3.2.1.1"/>
    </reaction>
</comment>
<comment type="cofactor">
    <cofactor evidence="1">
        <name>Ca(2+)</name>
        <dbReference type="ChEBI" id="CHEBI:29108"/>
    </cofactor>
    <text evidence="1">Binds 2 calcium ions per subunit. Calcium is inhibitory at high concentrations.</text>
</comment>
<comment type="subcellular location">
    <subcellularLocation>
        <location evidence="5">Cell membrane</location>
        <topology evidence="5">Lipid-anchor</topology>
        <topology evidence="5">GPI-anchor</topology>
    </subcellularLocation>
</comment>
<comment type="PTM">
    <text evidence="4">N-glycosylated.</text>
</comment>
<comment type="similarity">
    <text evidence="5">Belongs to the glycosyl hydrolase 13 family.</text>
</comment>
<keyword id="KW-0106">Calcium</keyword>
<keyword id="KW-0119">Carbohydrate metabolism</keyword>
<keyword id="KW-1003">Cell membrane</keyword>
<keyword id="KW-1015">Disulfide bond</keyword>
<keyword id="KW-0325">Glycoprotein</keyword>
<keyword id="KW-0326">Glycosidase</keyword>
<keyword id="KW-0336">GPI-anchor</keyword>
<keyword id="KW-0378">Hydrolase</keyword>
<keyword id="KW-0449">Lipoprotein</keyword>
<keyword id="KW-0472">Membrane</keyword>
<keyword id="KW-0479">Metal-binding</keyword>
<keyword id="KW-1185">Reference proteome</keyword>
<keyword id="KW-0732">Signal</keyword>
<proteinExistence type="evidence at protein level"/>
<organism>
    <name type="scientific">Schizosaccharomyces pombe (strain 972 / ATCC 24843)</name>
    <name type="common">Fission yeast</name>
    <dbReference type="NCBI Taxonomy" id="284812"/>
    <lineage>
        <taxon>Eukaryota</taxon>
        <taxon>Fungi</taxon>
        <taxon>Dikarya</taxon>
        <taxon>Ascomycota</taxon>
        <taxon>Taphrinomycotina</taxon>
        <taxon>Schizosaccharomycetes</taxon>
        <taxon>Schizosaccharomycetales</taxon>
        <taxon>Schizosaccharomycetaceae</taxon>
        <taxon>Schizosaccharomyces</taxon>
    </lineage>
</organism>
<feature type="signal peptide" evidence="3">
    <location>
        <begin position="1"/>
        <end position="21"/>
    </location>
</feature>
<feature type="chain" id="PRO_0000001358" description="Alpha-amylase 3">
    <location>
        <begin position="22"/>
        <end position="538"/>
    </location>
</feature>
<feature type="propeptide" id="PRO_0000255453" description="Removed in mature form" evidence="3">
    <location>
        <begin position="539"/>
        <end position="564"/>
    </location>
</feature>
<feature type="active site" description="Nucleophile" evidence="6">
    <location>
        <position position="229"/>
    </location>
</feature>
<feature type="active site" description="Proton donor" evidence="6">
    <location>
        <position position="253"/>
    </location>
</feature>
<feature type="binding site" evidence="1">
    <location>
        <position position="56"/>
    </location>
    <ligand>
        <name>substrate</name>
    </ligand>
</feature>
<feature type="binding site" evidence="1">
    <location>
        <position position="105"/>
    </location>
    <ligand>
        <name>substrate</name>
    </ligand>
</feature>
<feature type="binding site" evidence="1">
    <location>
        <position position="143"/>
    </location>
    <ligand>
        <name>Ca(2+)</name>
        <dbReference type="ChEBI" id="CHEBI:29108"/>
        <label>1</label>
    </ligand>
</feature>
<feature type="binding site" evidence="2">
    <location>
        <position position="198"/>
    </location>
    <ligand>
        <name>Ca(2+)</name>
        <dbReference type="ChEBI" id="CHEBI:29108"/>
        <label>1</label>
    </ligand>
</feature>
<feature type="binding site" evidence="1">
    <location>
        <position position="227"/>
    </location>
    <ligand>
        <name>substrate</name>
    </ligand>
</feature>
<feature type="binding site" evidence="1">
    <location>
        <position position="229"/>
    </location>
    <ligand>
        <name>Ca(2+)</name>
        <dbReference type="ChEBI" id="CHEBI:29108"/>
        <label>2</label>
    </ligand>
</feature>
<feature type="binding site" evidence="1">
    <location>
        <begin position="232"/>
        <end position="233"/>
    </location>
    <ligand>
        <name>substrate</name>
    </ligand>
</feature>
<feature type="binding site" evidence="1">
    <location>
        <position position="253"/>
    </location>
    <ligand>
        <name>Ca(2+)</name>
        <dbReference type="ChEBI" id="CHEBI:29108"/>
        <label>2</label>
    </ligand>
</feature>
<feature type="binding site" evidence="1">
    <location>
        <position position="322"/>
    </location>
    <ligand>
        <name>substrate</name>
    </ligand>
</feature>
<feature type="binding site" evidence="1">
    <location>
        <position position="369"/>
    </location>
    <ligand>
        <name>substrate</name>
    </ligand>
</feature>
<feature type="site" description="Transition state stabilizer" evidence="1">
    <location>
        <position position="322"/>
    </location>
</feature>
<feature type="lipid moiety-binding region" description="GPI-anchor amidated serine" evidence="3">
    <location>
        <position position="538"/>
    </location>
</feature>
<feature type="glycosylation site" description="N-linked (GlcNAc...) asparagine" evidence="3">
    <location>
        <position position="181"/>
    </location>
</feature>
<feature type="glycosylation site" description="N-linked (GlcNAc...) asparagine" evidence="3">
    <location>
        <position position="235"/>
    </location>
</feature>
<feature type="glycosylation site" description="N-linked (GlcNAc...) asparagine" evidence="3">
    <location>
        <position position="282"/>
    </location>
</feature>
<feature type="glycosylation site" description="N-linked (GlcNAc...) asparagine" evidence="3">
    <location>
        <position position="305"/>
    </location>
</feature>
<feature type="glycosylation site" description="N-linked (GlcNAc...) asparagine" evidence="3">
    <location>
        <position position="438"/>
    </location>
</feature>
<feature type="glycosylation site" description="N-linked (GlcNAc...) asparagine" evidence="3">
    <location>
        <position position="447"/>
    </location>
</feature>
<feature type="glycosylation site" description="N-linked (GlcNAc...) asparagine" evidence="3">
    <location>
        <position position="498"/>
    </location>
</feature>
<feature type="disulfide bond" evidence="2">
    <location>
        <begin position="51"/>
        <end position="59"/>
    </location>
</feature>
<feature type="disulfide bond" evidence="2">
    <location>
        <begin position="172"/>
        <end position="188"/>
    </location>
</feature>
<feature type="disulfide bond" evidence="2">
    <location>
        <begin position="263"/>
        <end position="306"/>
    </location>
</feature>
<feature type="mutagenesis site" description="No activity." evidence="4">
    <original>D</original>
    <variation>A</variation>
    <location>
        <position position="229"/>
    </location>
</feature>
<feature type="mutagenesis site" description="No activity." evidence="4">
    <original>E</original>
    <variation>A</variation>
    <location>
        <position position="253"/>
    </location>
</feature>
<sequence length="564" mass="63206">MFGVYFVLLFLSSALIHVANAGSNAEWRKRIIYQILTDRFAVDDGSTDNPCDPDANQYCGGTWKGIENKLDYIEDMGFNAIWISPIDKNIEGDIDGAGYAYHGYWNTDYESLNEHFGTEDDLVSLITAAHKAGIWVMLDSIVNSMALAPPLADADYSSLNPFNKESYFHPYCLIDWDITDNETNVMDCWQDSGVLLADLDVESSDVSSYLSDHFKSLISKYDFDGLRIDAVKMMNYTFFPDFVDATGVYSVGEVFSYDPDTMCSYMSVLPGVTNYFLQLYINFSFTATGAGFTLIPTYQEVMASNCSKYDSTLMLTFIENHDLYRFPYYTSDQSQIMGALSFVLIWDGIPSIFYGQEQGFNGGEDPANRPALWLTDYDQSNPYYTVIKTMVAFRKFVITQDPDWVTSTYQSIESAVDHYVGQKNDVLVMFNNMGVTNNLTIYEVETNYTANEVVSDVFGHRTLTVGADKTLTASMTNGYPLIMYPHSKMSGFTLPTVNRTVMPSTSATATTTVYTSYYSPSYSARSFTGTGSIFTISSSSRLILSFKTLVFGLGVTAMLFVLFF</sequence>
<gene>
    <name type="primary">aah3</name>
    <name type="ORF">SPCC63.02c</name>
</gene>
<evidence type="ECO:0000250" key="1">
    <source>
        <dbReference type="UniProtKB" id="P0C1B3"/>
    </source>
</evidence>
<evidence type="ECO:0000250" key="2">
    <source>
        <dbReference type="UniProtKB" id="P56271"/>
    </source>
</evidence>
<evidence type="ECO:0000255" key="3"/>
<evidence type="ECO:0000269" key="4">
    <source>
    </source>
</evidence>
<evidence type="ECO:0000305" key="5"/>
<evidence type="ECO:0000305" key="6">
    <source>
    </source>
</evidence>
<reference key="1">
    <citation type="journal article" date="2002" name="Nature">
        <title>The genome sequence of Schizosaccharomyces pombe.</title>
        <authorList>
            <person name="Wood V."/>
            <person name="Gwilliam R."/>
            <person name="Rajandream M.A."/>
            <person name="Lyne M.H."/>
            <person name="Lyne R."/>
            <person name="Stewart A."/>
            <person name="Sgouros J.G."/>
            <person name="Peat N."/>
            <person name="Hayles J."/>
            <person name="Baker S.G."/>
            <person name="Basham D."/>
            <person name="Bowman S."/>
            <person name="Brooks K."/>
            <person name="Brown D."/>
            <person name="Brown S."/>
            <person name="Chillingworth T."/>
            <person name="Churcher C.M."/>
            <person name="Collins M."/>
            <person name="Connor R."/>
            <person name="Cronin A."/>
            <person name="Davis P."/>
            <person name="Feltwell T."/>
            <person name="Fraser A."/>
            <person name="Gentles S."/>
            <person name="Goble A."/>
            <person name="Hamlin N."/>
            <person name="Harris D.E."/>
            <person name="Hidalgo J."/>
            <person name="Hodgson G."/>
            <person name="Holroyd S."/>
            <person name="Hornsby T."/>
            <person name="Howarth S."/>
            <person name="Huckle E.J."/>
            <person name="Hunt S."/>
            <person name="Jagels K."/>
            <person name="James K.D."/>
            <person name="Jones L."/>
            <person name="Jones M."/>
            <person name="Leather S."/>
            <person name="McDonald S."/>
            <person name="McLean J."/>
            <person name="Mooney P."/>
            <person name="Moule S."/>
            <person name="Mungall K.L."/>
            <person name="Murphy L.D."/>
            <person name="Niblett D."/>
            <person name="Odell C."/>
            <person name="Oliver K."/>
            <person name="O'Neil S."/>
            <person name="Pearson D."/>
            <person name="Quail M.A."/>
            <person name="Rabbinowitsch E."/>
            <person name="Rutherford K.M."/>
            <person name="Rutter S."/>
            <person name="Saunders D."/>
            <person name="Seeger K."/>
            <person name="Sharp S."/>
            <person name="Skelton J."/>
            <person name="Simmonds M.N."/>
            <person name="Squares R."/>
            <person name="Squares S."/>
            <person name="Stevens K."/>
            <person name="Taylor K."/>
            <person name="Taylor R.G."/>
            <person name="Tivey A."/>
            <person name="Walsh S.V."/>
            <person name="Warren T."/>
            <person name="Whitehead S."/>
            <person name="Woodward J.R."/>
            <person name="Volckaert G."/>
            <person name="Aert R."/>
            <person name="Robben J."/>
            <person name="Grymonprez B."/>
            <person name="Weltjens I."/>
            <person name="Vanstreels E."/>
            <person name="Rieger M."/>
            <person name="Schaefer M."/>
            <person name="Mueller-Auer S."/>
            <person name="Gabel C."/>
            <person name="Fuchs M."/>
            <person name="Duesterhoeft A."/>
            <person name="Fritzc C."/>
            <person name="Holzer E."/>
            <person name="Moestl D."/>
            <person name="Hilbert H."/>
            <person name="Borzym K."/>
            <person name="Langer I."/>
            <person name="Beck A."/>
            <person name="Lehrach H."/>
            <person name="Reinhardt R."/>
            <person name="Pohl T.M."/>
            <person name="Eger P."/>
            <person name="Zimmermann W."/>
            <person name="Wedler H."/>
            <person name="Wambutt R."/>
            <person name="Purnelle B."/>
            <person name="Goffeau A."/>
            <person name="Cadieu E."/>
            <person name="Dreano S."/>
            <person name="Gloux S."/>
            <person name="Lelaure V."/>
            <person name="Mottier S."/>
            <person name="Galibert F."/>
            <person name="Aves S.J."/>
            <person name="Xiang Z."/>
            <person name="Hunt C."/>
            <person name="Moore K."/>
            <person name="Hurst S.M."/>
            <person name="Lucas M."/>
            <person name="Rochet M."/>
            <person name="Gaillardin C."/>
            <person name="Tallada V.A."/>
            <person name="Garzon A."/>
            <person name="Thode G."/>
            <person name="Daga R.R."/>
            <person name="Cruzado L."/>
            <person name="Jimenez J."/>
            <person name="Sanchez M."/>
            <person name="del Rey F."/>
            <person name="Benito J."/>
            <person name="Dominguez A."/>
            <person name="Revuelta J.L."/>
            <person name="Moreno S."/>
            <person name="Armstrong J."/>
            <person name="Forsburg S.L."/>
            <person name="Cerutti L."/>
            <person name="Lowe T."/>
            <person name="McCombie W.R."/>
            <person name="Paulsen I."/>
            <person name="Potashkin J."/>
            <person name="Shpakovski G.V."/>
            <person name="Ussery D."/>
            <person name="Barrell B.G."/>
            <person name="Nurse P."/>
        </authorList>
    </citation>
    <scope>NUCLEOTIDE SEQUENCE [LARGE SCALE GENOMIC DNA]</scope>
    <source>
        <strain>972 / ATCC 24843</strain>
    </source>
</reference>
<reference key="2">
    <citation type="journal article" date="2003" name="Yeast">
        <title>Genome-wide identification of fungal GPI proteins.</title>
        <authorList>
            <person name="De Groot P.W."/>
            <person name="Hellingwerf K.J."/>
            <person name="Klis F.M."/>
        </authorList>
    </citation>
    <scope>PREDICTION OF GPI-ANCHOR</scope>
</reference>
<reference key="3">
    <citation type="journal article" date="2006" name="Biosci. Biotechnol. Biochem.">
        <title>An alpha-amylase homologue, aah3, encodes a GPI-anchored membrane protein required for cell wall integrity and morphogenesis in Schizosaccharomyces pombe.</title>
        <authorList>
            <person name="Morita T."/>
            <person name="Tanaka N."/>
            <person name="Hosomi A."/>
            <person name="Giga-Hama Y."/>
            <person name="Takegawa K."/>
        </authorList>
    </citation>
    <scope>FUNCTION</scope>
    <scope>GPI-ANCHOR</scope>
    <scope>GLYCOSYLATION</scope>
    <scope>MUTAGENESIS OF ASP-229 AND GLU-253</scope>
</reference>
<reference key="4">
    <citation type="journal article" date="2006" name="Nat. Biotechnol.">
        <title>ORFeome cloning and global analysis of protein localization in the fission yeast Schizosaccharomyces pombe.</title>
        <authorList>
            <person name="Matsuyama A."/>
            <person name="Arai R."/>
            <person name="Yashiroda Y."/>
            <person name="Shirai A."/>
            <person name="Kamata A."/>
            <person name="Sekido S."/>
            <person name="Kobayashi Y."/>
            <person name="Hashimoto A."/>
            <person name="Hamamoto M."/>
            <person name="Hiraoka Y."/>
            <person name="Horinouchi S."/>
            <person name="Yoshida M."/>
        </authorList>
    </citation>
    <scope>SUBCELLULAR LOCATION [LARGE SCALE ANALYSIS]</scope>
</reference>
<accession>Q9Y7S9</accession>
<protein>
    <recommendedName>
        <fullName>Alpha-amylase 3</fullName>
        <ecNumber>3.2.1.1</ecNumber>
    </recommendedName>
    <alternativeName>
        <fullName>1,4-alpha-D-glucan glucanohydrolase</fullName>
    </alternativeName>
</protein>
<dbReference type="EC" id="3.2.1.1"/>
<dbReference type="EMBL" id="CU329672">
    <property type="protein sequence ID" value="CAB40006.1"/>
    <property type="molecule type" value="Genomic_DNA"/>
</dbReference>
<dbReference type="PIR" id="T41503">
    <property type="entry name" value="T41503"/>
</dbReference>
<dbReference type="RefSeq" id="NP_587976.1">
    <property type="nucleotide sequence ID" value="NM_001022967.2"/>
</dbReference>
<dbReference type="SMR" id="Q9Y7S9"/>
<dbReference type="BioGRID" id="275980">
    <property type="interactions" value="4"/>
</dbReference>
<dbReference type="FunCoup" id="Q9Y7S9">
    <property type="interactions" value="132"/>
</dbReference>
<dbReference type="STRING" id="284812.Q9Y7S9"/>
<dbReference type="CAZy" id="GH13">
    <property type="family name" value="Glycoside Hydrolase Family 13"/>
</dbReference>
<dbReference type="GlyCosmos" id="Q9Y7S9">
    <property type="glycosylation" value="7 sites, No reported glycans"/>
</dbReference>
<dbReference type="iPTMnet" id="Q9Y7S9"/>
<dbReference type="PaxDb" id="4896-SPCC63.02c.1"/>
<dbReference type="EnsemblFungi" id="SPCC63.02c.1">
    <property type="protein sequence ID" value="SPCC63.02c.1:pep"/>
    <property type="gene ID" value="SPCC63.02c"/>
</dbReference>
<dbReference type="GeneID" id="2539415"/>
<dbReference type="KEGG" id="spo:2539415"/>
<dbReference type="PomBase" id="SPCC63.02c">
    <property type="gene designation" value="aah3"/>
</dbReference>
<dbReference type="VEuPathDB" id="FungiDB:SPCC63.02c"/>
<dbReference type="eggNOG" id="KOG0471">
    <property type="taxonomic scope" value="Eukaryota"/>
</dbReference>
<dbReference type="HOGENOM" id="CLU_006462_7_2_1"/>
<dbReference type="InParanoid" id="Q9Y7S9"/>
<dbReference type="OMA" id="DAVKMMN"/>
<dbReference type="PhylomeDB" id="Q9Y7S9"/>
<dbReference type="PRO" id="PR:Q9Y7S9"/>
<dbReference type="Proteomes" id="UP000002485">
    <property type="component" value="Chromosome III"/>
</dbReference>
<dbReference type="GO" id="GO:0009897">
    <property type="term" value="C:external side of plasma membrane"/>
    <property type="evidence" value="ECO:0000305"/>
    <property type="project" value="PomBase"/>
</dbReference>
<dbReference type="GO" id="GO:0009277">
    <property type="term" value="C:fungal-type cell wall"/>
    <property type="evidence" value="ECO:0000314"/>
    <property type="project" value="PomBase"/>
</dbReference>
<dbReference type="GO" id="GO:0005886">
    <property type="term" value="C:plasma membrane"/>
    <property type="evidence" value="ECO:0000314"/>
    <property type="project" value="PomBase"/>
</dbReference>
<dbReference type="GO" id="GO:0004556">
    <property type="term" value="F:alpha-amylase activity"/>
    <property type="evidence" value="ECO:0007669"/>
    <property type="project" value="UniProtKB-EC"/>
</dbReference>
<dbReference type="GO" id="GO:0005509">
    <property type="term" value="F:calcium ion binding"/>
    <property type="evidence" value="ECO:0007669"/>
    <property type="project" value="InterPro"/>
</dbReference>
<dbReference type="GO" id="GO:0070591">
    <property type="term" value="P:ascospore wall biogenesis"/>
    <property type="evidence" value="ECO:0000315"/>
    <property type="project" value="PomBase"/>
</dbReference>
<dbReference type="GO" id="GO:0016052">
    <property type="term" value="P:carbohydrate catabolic process"/>
    <property type="evidence" value="ECO:0007669"/>
    <property type="project" value="InterPro"/>
</dbReference>
<dbReference type="CDD" id="cd11319">
    <property type="entry name" value="AmyAc_euk_AmyA"/>
    <property type="match status" value="1"/>
</dbReference>
<dbReference type="FunFam" id="2.60.40.1180:FF:000037">
    <property type="entry name" value="Alpha-amylase A"/>
    <property type="match status" value="1"/>
</dbReference>
<dbReference type="FunFam" id="3.20.20.80:FF:000120">
    <property type="entry name" value="Alpha-amylase A"/>
    <property type="match status" value="1"/>
</dbReference>
<dbReference type="Gene3D" id="3.20.20.80">
    <property type="entry name" value="Glycosidases"/>
    <property type="match status" value="1"/>
</dbReference>
<dbReference type="Gene3D" id="2.60.40.1180">
    <property type="entry name" value="Golgi alpha-mannosidase II"/>
    <property type="match status" value="1"/>
</dbReference>
<dbReference type="InterPro" id="IPR013777">
    <property type="entry name" value="A-amylase-like"/>
</dbReference>
<dbReference type="InterPro" id="IPR015340">
    <property type="entry name" value="A_amylase_C_dom"/>
</dbReference>
<dbReference type="InterPro" id="IPR006047">
    <property type="entry name" value="Glyco_hydro_13_cat_dom"/>
</dbReference>
<dbReference type="InterPro" id="IPR013780">
    <property type="entry name" value="Glyco_hydro_b"/>
</dbReference>
<dbReference type="InterPro" id="IPR017853">
    <property type="entry name" value="Glycoside_hydrolase_SF"/>
</dbReference>
<dbReference type="PANTHER" id="PTHR10357:SF224">
    <property type="entry name" value="ALPHA-AMYLASE 3"/>
    <property type="match status" value="1"/>
</dbReference>
<dbReference type="PANTHER" id="PTHR10357">
    <property type="entry name" value="ALPHA-AMYLASE FAMILY MEMBER"/>
    <property type="match status" value="1"/>
</dbReference>
<dbReference type="Pfam" id="PF09260">
    <property type="entry name" value="A_amylase_dom_C"/>
    <property type="match status" value="1"/>
</dbReference>
<dbReference type="Pfam" id="PF00128">
    <property type="entry name" value="Alpha-amylase"/>
    <property type="match status" value="1"/>
</dbReference>
<dbReference type="PIRSF" id="PIRSF001024">
    <property type="entry name" value="Alph-amyl_fung"/>
    <property type="match status" value="1"/>
</dbReference>
<dbReference type="SMART" id="SM00642">
    <property type="entry name" value="Aamy"/>
    <property type="match status" value="1"/>
</dbReference>
<dbReference type="SUPFAM" id="SSF51445">
    <property type="entry name" value="(Trans)glycosidases"/>
    <property type="match status" value="1"/>
</dbReference>
<dbReference type="SUPFAM" id="SSF51011">
    <property type="entry name" value="Glycosyl hydrolase domain"/>
    <property type="match status" value="1"/>
</dbReference>